<organism>
    <name type="scientific">Mycobacterium tuberculosis (strain ATCC 25177 / H37Ra)</name>
    <dbReference type="NCBI Taxonomy" id="419947"/>
    <lineage>
        <taxon>Bacteria</taxon>
        <taxon>Bacillati</taxon>
        <taxon>Actinomycetota</taxon>
        <taxon>Actinomycetes</taxon>
        <taxon>Mycobacteriales</taxon>
        <taxon>Mycobacteriaceae</taxon>
        <taxon>Mycobacterium</taxon>
        <taxon>Mycobacterium tuberculosis complex</taxon>
    </lineage>
</organism>
<dbReference type="EC" id="4.2.3.5" evidence="1"/>
<dbReference type="EMBL" id="CP000611">
    <property type="protein sequence ID" value="ABQ74339.1"/>
    <property type="molecule type" value="Genomic_DNA"/>
</dbReference>
<dbReference type="RefSeq" id="WP_003413027.1">
    <property type="nucleotide sequence ID" value="NZ_CP016972.1"/>
</dbReference>
<dbReference type="SMR" id="A5U5N9"/>
<dbReference type="KEGG" id="mra:MRA_2568"/>
<dbReference type="eggNOG" id="COG0082">
    <property type="taxonomic scope" value="Bacteria"/>
</dbReference>
<dbReference type="HOGENOM" id="CLU_034547_2_0_11"/>
<dbReference type="UniPathway" id="UPA00053">
    <property type="reaction ID" value="UER00090"/>
</dbReference>
<dbReference type="Proteomes" id="UP000001988">
    <property type="component" value="Chromosome"/>
</dbReference>
<dbReference type="GO" id="GO:0005829">
    <property type="term" value="C:cytosol"/>
    <property type="evidence" value="ECO:0007669"/>
    <property type="project" value="TreeGrafter"/>
</dbReference>
<dbReference type="GO" id="GO:0004107">
    <property type="term" value="F:chorismate synthase activity"/>
    <property type="evidence" value="ECO:0007669"/>
    <property type="project" value="UniProtKB-UniRule"/>
</dbReference>
<dbReference type="GO" id="GO:0010181">
    <property type="term" value="F:FMN binding"/>
    <property type="evidence" value="ECO:0007669"/>
    <property type="project" value="TreeGrafter"/>
</dbReference>
<dbReference type="GO" id="GO:0008652">
    <property type="term" value="P:amino acid biosynthetic process"/>
    <property type="evidence" value="ECO:0007669"/>
    <property type="project" value="UniProtKB-KW"/>
</dbReference>
<dbReference type="GO" id="GO:0009073">
    <property type="term" value="P:aromatic amino acid family biosynthetic process"/>
    <property type="evidence" value="ECO:0007669"/>
    <property type="project" value="UniProtKB-KW"/>
</dbReference>
<dbReference type="GO" id="GO:0009423">
    <property type="term" value="P:chorismate biosynthetic process"/>
    <property type="evidence" value="ECO:0007669"/>
    <property type="project" value="UniProtKB-UniRule"/>
</dbReference>
<dbReference type="CDD" id="cd07304">
    <property type="entry name" value="Chorismate_synthase"/>
    <property type="match status" value="1"/>
</dbReference>
<dbReference type="FunFam" id="3.60.150.10:FF:000002">
    <property type="entry name" value="Chorismate synthase"/>
    <property type="match status" value="1"/>
</dbReference>
<dbReference type="Gene3D" id="3.60.150.10">
    <property type="entry name" value="Chorismate synthase AroC"/>
    <property type="match status" value="1"/>
</dbReference>
<dbReference type="HAMAP" id="MF_00300">
    <property type="entry name" value="Chorismate_synth"/>
    <property type="match status" value="1"/>
</dbReference>
<dbReference type="InterPro" id="IPR000453">
    <property type="entry name" value="Chorismate_synth"/>
</dbReference>
<dbReference type="InterPro" id="IPR035904">
    <property type="entry name" value="Chorismate_synth_AroC_sf"/>
</dbReference>
<dbReference type="InterPro" id="IPR020541">
    <property type="entry name" value="Chorismate_synthase_CS"/>
</dbReference>
<dbReference type="NCBIfam" id="TIGR00033">
    <property type="entry name" value="aroC"/>
    <property type="match status" value="1"/>
</dbReference>
<dbReference type="NCBIfam" id="NF003793">
    <property type="entry name" value="PRK05382.1"/>
    <property type="match status" value="1"/>
</dbReference>
<dbReference type="PANTHER" id="PTHR21085">
    <property type="entry name" value="CHORISMATE SYNTHASE"/>
    <property type="match status" value="1"/>
</dbReference>
<dbReference type="PANTHER" id="PTHR21085:SF0">
    <property type="entry name" value="CHORISMATE SYNTHASE"/>
    <property type="match status" value="1"/>
</dbReference>
<dbReference type="Pfam" id="PF01264">
    <property type="entry name" value="Chorismate_synt"/>
    <property type="match status" value="1"/>
</dbReference>
<dbReference type="PIRSF" id="PIRSF001456">
    <property type="entry name" value="Chorismate_synth"/>
    <property type="match status" value="1"/>
</dbReference>
<dbReference type="SUPFAM" id="SSF103263">
    <property type="entry name" value="Chorismate synthase, AroC"/>
    <property type="match status" value="1"/>
</dbReference>
<dbReference type="PROSITE" id="PS00787">
    <property type="entry name" value="CHORISMATE_SYNTHASE_1"/>
    <property type="match status" value="1"/>
</dbReference>
<dbReference type="PROSITE" id="PS00788">
    <property type="entry name" value="CHORISMATE_SYNTHASE_2"/>
    <property type="match status" value="1"/>
</dbReference>
<dbReference type="PROSITE" id="PS00789">
    <property type="entry name" value="CHORISMATE_SYNTHASE_3"/>
    <property type="match status" value="1"/>
</dbReference>
<keyword id="KW-0028">Amino-acid biosynthesis</keyword>
<keyword id="KW-0057">Aromatic amino acid biosynthesis</keyword>
<keyword id="KW-0274">FAD</keyword>
<keyword id="KW-0285">Flavoprotein</keyword>
<keyword id="KW-0288">FMN</keyword>
<keyword id="KW-0456">Lyase</keyword>
<keyword id="KW-0521">NADP</keyword>
<keyword id="KW-1185">Reference proteome</keyword>
<comment type="function">
    <text evidence="1">Catalyzes the anti-1,4-elimination of the C-3 phosphate and the C-6 proR hydrogen from 5-enolpyruvylshikimate-3-phosphate (EPSP) to yield chorismate, which is the branch point compound that serves as the starting substrate for the three terminal pathways of aromatic amino acid biosynthesis. This reaction introduces a second double bond into the aromatic ring system.</text>
</comment>
<comment type="catalytic activity">
    <reaction evidence="1">
        <text>5-O-(1-carboxyvinyl)-3-phosphoshikimate = chorismate + phosphate</text>
        <dbReference type="Rhea" id="RHEA:21020"/>
        <dbReference type="ChEBI" id="CHEBI:29748"/>
        <dbReference type="ChEBI" id="CHEBI:43474"/>
        <dbReference type="ChEBI" id="CHEBI:57701"/>
        <dbReference type="EC" id="4.2.3.5"/>
    </reaction>
</comment>
<comment type="cofactor">
    <cofactor evidence="1">
        <name>FMNH2</name>
        <dbReference type="ChEBI" id="CHEBI:57618"/>
    </cofactor>
    <text evidence="1">Reduced FMN (FMNH(2)).</text>
</comment>
<comment type="pathway">
    <text evidence="1">Metabolic intermediate biosynthesis; chorismate biosynthesis; chorismate from D-erythrose 4-phosphate and phosphoenolpyruvate: step 7/7.</text>
</comment>
<comment type="subunit">
    <text evidence="1">Homotetramer.</text>
</comment>
<comment type="similarity">
    <text evidence="1">Belongs to the chorismate synthase family.</text>
</comment>
<gene>
    <name evidence="1" type="primary">aroC</name>
    <name type="ordered locus">MRA_2568</name>
</gene>
<accession>A5U5N9</accession>
<feature type="chain" id="PRO_0000322414" description="Chorismate synthase">
    <location>
        <begin position="1"/>
        <end position="401"/>
    </location>
</feature>
<feature type="binding site" evidence="1">
    <location>
        <position position="40"/>
    </location>
    <ligand>
        <name>NADP(+)</name>
        <dbReference type="ChEBI" id="CHEBI:58349"/>
    </ligand>
</feature>
<feature type="binding site" evidence="1">
    <location>
        <position position="46"/>
    </location>
    <ligand>
        <name>NADP(+)</name>
        <dbReference type="ChEBI" id="CHEBI:58349"/>
    </ligand>
</feature>
<feature type="binding site" evidence="1">
    <location>
        <begin position="135"/>
        <end position="137"/>
    </location>
    <ligand>
        <name>FMN</name>
        <dbReference type="ChEBI" id="CHEBI:58210"/>
    </ligand>
</feature>
<feature type="binding site" evidence="1">
    <location>
        <begin position="256"/>
        <end position="257"/>
    </location>
    <ligand>
        <name>FMN</name>
        <dbReference type="ChEBI" id="CHEBI:58210"/>
    </ligand>
</feature>
<feature type="binding site" evidence="1">
    <location>
        <position position="300"/>
    </location>
    <ligand>
        <name>FMN</name>
        <dbReference type="ChEBI" id="CHEBI:58210"/>
    </ligand>
</feature>
<feature type="binding site" evidence="1">
    <location>
        <begin position="315"/>
        <end position="319"/>
    </location>
    <ligand>
        <name>FMN</name>
        <dbReference type="ChEBI" id="CHEBI:58210"/>
    </ligand>
</feature>
<feature type="binding site" evidence="1">
    <location>
        <position position="341"/>
    </location>
    <ligand>
        <name>FMN</name>
        <dbReference type="ChEBI" id="CHEBI:58210"/>
    </ligand>
</feature>
<name>AROC_MYCTA</name>
<proteinExistence type="inferred from homology"/>
<sequence>MLRWITAGESHGRALVAVVEGMVAGVHVTSADIADQLARRRLGYGRGARMTFERDAVTVLSGIRHGSTLGGPIAIEIGNTEWPKWETVMAADPVDPAELADVARNAPLTRPRPGHADYAGMLKYGFDDARPVLERASARETAARVAAGTVARAFLRQALGVEVLSHVISIGASAPYEGPPPRAEDLPAIDASPVRAYDKAAEADMIAQIEAAKKDGDTLGGVVEAVALGLPVGLGSFTSGDHRLDSQLAAAVMGIQAIKGVEIGDGFQTARRRGSRAHDEMYPGPDGVVRSTNRAGGLEGGMTNGQPLRVRAAMKPISTVPRALATVDLATGDEAVAIHQRSDVCAVPAAGVVVETMVALVLARAALEKFGGDSLAETQRNIAAYQRSVADREAPAARVSG</sequence>
<protein>
    <recommendedName>
        <fullName evidence="1">Chorismate synthase</fullName>
        <shortName evidence="1">CS</shortName>
        <ecNumber evidence="1">4.2.3.5</ecNumber>
    </recommendedName>
    <alternativeName>
        <fullName evidence="1">5-enolpyruvylshikimate-3-phosphate phospholyase</fullName>
    </alternativeName>
</protein>
<reference key="1">
    <citation type="journal article" date="2008" name="PLoS ONE">
        <title>Genetic basis of virulence attenuation revealed by comparative genomic analysis of Mycobacterium tuberculosis strain H37Ra versus H37Rv.</title>
        <authorList>
            <person name="Zheng H."/>
            <person name="Lu L."/>
            <person name="Wang B."/>
            <person name="Pu S."/>
            <person name="Zhang X."/>
            <person name="Zhu G."/>
            <person name="Shi W."/>
            <person name="Zhang L."/>
            <person name="Wang H."/>
            <person name="Wang S."/>
            <person name="Zhao G."/>
            <person name="Zhang Y."/>
        </authorList>
    </citation>
    <scope>NUCLEOTIDE SEQUENCE [LARGE SCALE GENOMIC DNA]</scope>
    <source>
        <strain>ATCC 25177 / H37Ra</strain>
    </source>
</reference>
<evidence type="ECO:0000255" key="1">
    <source>
        <dbReference type="HAMAP-Rule" id="MF_00300"/>
    </source>
</evidence>